<feature type="chain" id="PRO_1000020163" description="Methionyl-tRNA formyltransferase">
    <location>
        <begin position="1"/>
        <end position="315"/>
    </location>
</feature>
<feature type="binding site" evidence="1">
    <location>
        <begin position="113"/>
        <end position="116"/>
    </location>
    <ligand>
        <name>(6S)-5,6,7,8-tetrahydrofolate</name>
        <dbReference type="ChEBI" id="CHEBI:57453"/>
    </ligand>
</feature>
<keyword id="KW-0648">Protein biosynthesis</keyword>
<keyword id="KW-1185">Reference proteome</keyword>
<keyword id="KW-0808">Transferase</keyword>
<organism>
    <name type="scientific">Shigella dysenteriae serotype 1 (strain Sd197)</name>
    <dbReference type="NCBI Taxonomy" id="300267"/>
    <lineage>
        <taxon>Bacteria</taxon>
        <taxon>Pseudomonadati</taxon>
        <taxon>Pseudomonadota</taxon>
        <taxon>Gammaproteobacteria</taxon>
        <taxon>Enterobacterales</taxon>
        <taxon>Enterobacteriaceae</taxon>
        <taxon>Shigella</taxon>
    </lineage>
</organism>
<evidence type="ECO:0000255" key="1">
    <source>
        <dbReference type="HAMAP-Rule" id="MF_00182"/>
    </source>
</evidence>
<reference key="1">
    <citation type="journal article" date="2005" name="Nucleic Acids Res.">
        <title>Genome dynamics and diversity of Shigella species, the etiologic agents of bacillary dysentery.</title>
        <authorList>
            <person name="Yang F."/>
            <person name="Yang J."/>
            <person name="Zhang X."/>
            <person name="Chen L."/>
            <person name="Jiang Y."/>
            <person name="Yan Y."/>
            <person name="Tang X."/>
            <person name="Wang J."/>
            <person name="Xiong Z."/>
            <person name="Dong J."/>
            <person name="Xue Y."/>
            <person name="Zhu Y."/>
            <person name="Xu X."/>
            <person name="Sun L."/>
            <person name="Chen S."/>
            <person name="Nie H."/>
            <person name="Peng J."/>
            <person name="Xu J."/>
            <person name="Wang Y."/>
            <person name="Yuan Z."/>
            <person name="Wen Y."/>
            <person name="Yao Z."/>
            <person name="Shen Y."/>
            <person name="Qiang B."/>
            <person name="Hou Y."/>
            <person name="Yu J."/>
            <person name="Jin Q."/>
        </authorList>
    </citation>
    <scope>NUCLEOTIDE SEQUENCE [LARGE SCALE GENOMIC DNA]</scope>
    <source>
        <strain>Sd197</strain>
    </source>
</reference>
<protein>
    <recommendedName>
        <fullName evidence="1">Methionyl-tRNA formyltransferase</fullName>
        <ecNumber evidence="1">2.1.2.9</ecNumber>
    </recommendedName>
</protein>
<gene>
    <name evidence="1" type="primary">fmt</name>
    <name type="ordered locus">SDY_3464</name>
</gene>
<comment type="function">
    <text evidence="1">Attaches a formyl group to the free amino group of methionyl-tRNA(fMet). The formyl group appears to play a dual role in the initiator identity of N-formylmethionyl-tRNA by promoting its recognition by IF2 and preventing the misappropriation of this tRNA by the elongation apparatus.</text>
</comment>
<comment type="catalytic activity">
    <reaction evidence="1">
        <text>L-methionyl-tRNA(fMet) + (6R)-10-formyltetrahydrofolate = N-formyl-L-methionyl-tRNA(fMet) + (6S)-5,6,7,8-tetrahydrofolate + H(+)</text>
        <dbReference type="Rhea" id="RHEA:24380"/>
        <dbReference type="Rhea" id="RHEA-COMP:9952"/>
        <dbReference type="Rhea" id="RHEA-COMP:9953"/>
        <dbReference type="ChEBI" id="CHEBI:15378"/>
        <dbReference type="ChEBI" id="CHEBI:57453"/>
        <dbReference type="ChEBI" id="CHEBI:78530"/>
        <dbReference type="ChEBI" id="CHEBI:78844"/>
        <dbReference type="ChEBI" id="CHEBI:195366"/>
        <dbReference type="EC" id="2.1.2.9"/>
    </reaction>
</comment>
<comment type="similarity">
    <text evidence="1">Belongs to the Fmt family.</text>
</comment>
<proteinExistence type="inferred from homology"/>
<name>FMT_SHIDS</name>
<accession>Q32B62</accession>
<sequence length="315" mass="34126">MSESLRIIFAGTPDFAARHLDALLSSGHNVVGVFTQPDRPAGRGKKLMPSPVKVLAEEKGLPVFQPVSLRPQENQQLVADLQADVMVVVAYGLILPKAVLEMPRLGCINVHGSLLPRWRGAAPIQRSLWAGDAETGVTIMQMDVGLDTGDMLYKLSCPITAEDTSGTLYDKLAELGPQGLITTLKQLADGTAKPEVQDETLVTYAEKLSKEEARIDWSLSAAQLERCIRAFNPWPMSWLEIEGQPVKVWKASVIDTATNAAPGTILEANKQGIQVATGDGILNLLSLQPAGKKAMSAQDLLNSRREWFVPGNRLA</sequence>
<dbReference type="EC" id="2.1.2.9" evidence="1"/>
<dbReference type="EMBL" id="CP000034">
    <property type="protein sequence ID" value="ABB63443.1"/>
    <property type="molecule type" value="Genomic_DNA"/>
</dbReference>
<dbReference type="RefSeq" id="WP_000004453.1">
    <property type="nucleotide sequence ID" value="NC_007606.1"/>
</dbReference>
<dbReference type="RefSeq" id="YP_404934.1">
    <property type="nucleotide sequence ID" value="NC_007606.1"/>
</dbReference>
<dbReference type="SMR" id="Q32B62"/>
<dbReference type="STRING" id="300267.SDY_3464"/>
<dbReference type="EnsemblBacteria" id="ABB63443">
    <property type="protein sequence ID" value="ABB63443"/>
    <property type="gene ID" value="SDY_3464"/>
</dbReference>
<dbReference type="KEGG" id="sdy:SDY_3464"/>
<dbReference type="PATRIC" id="fig|300267.13.peg.4117"/>
<dbReference type="HOGENOM" id="CLU_033347_1_2_6"/>
<dbReference type="Proteomes" id="UP000002716">
    <property type="component" value="Chromosome"/>
</dbReference>
<dbReference type="GO" id="GO:0005829">
    <property type="term" value="C:cytosol"/>
    <property type="evidence" value="ECO:0007669"/>
    <property type="project" value="TreeGrafter"/>
</dbReference>
<dbReference type="GO" id="GO:0004479">
    <property type="term" value="F:methionyl-tRNA formyltransferase activity"/>
    <property type="evidence" value="ECO:0007669"/>
    <property type="project" value="UniProtKB-UniRule"/>
</dbReference>
<dbReference type="CDD" id="cd08646">
    <property type="entry name" value="FMT_core_Met-tRNA-FMT_N"/>
    <property type="match status" value="1"/>
</dbReference>
<dbReference type="CDD" id="cd08704">
    <property type="entry name" value="Met_tRNA_FMT_C"/>
    <property type="match status" value="1"/>
</dbReference>
<dbReference type="FunFam" id="3.10.25.10:FF:000001">
    <property type="entry name" value="Methionyl-tRNA formyltransferase"/>
    <property type="match status" value="1"/>
</dbReference>
<dbReference type="FunFam" id="3.40.50.170:FF:000003">
    <property type="entry name" value="Methionyl-tRNA formyltransferase"/>
    <property type="match status" value="1"/>
</dbReference>
<dbReference type="Gene3D" id="3.10.25.10">
    <property type="entry name" value="Formyl transferase, C-terminal domain"/>
    <property type="match status" value="1"/>
</dbReference>
<dbReference type="Gene3D" id="3.40.50.170">
    <property type="entry name" value="Formyl transferase, N-terminal domain"/>
    <property type="match status" value="1"/>
</dbReference>
<dbReference type="HAMAP" id="MF_00182">
    <property type="entry name" value="Formyl_trans"/>
    <property type="match status" value="1"/>
</dbReference>
<dbReference type="InterPro" id="IPR005794">
    <property type="entry name" value="Fmt"/>
</dbReference>
<dbReference type="InterPro" id="IPR005793">
    <property type="entry name" value="Formyl_trans_C"/>
</dbReference>
<dbReference type="InterPro" id="IPR037022">
    <property type="entry name" value="Formyl_trans_C_sf"/>
</dbReference>
<dbReference type="InterPro" id="IPR002376">
    <property type="entry name" value="Formyl_transf_N"/>
</dbReference>
<dbReference type="InterPro" id="IPR036477">
    <property type="entry name" value="Formyl_transf_N_sf"/>
</dbReference>
<dbReference type="InterPro" id="IPR011034">
    <property type="entry name" value="Formyl_transferase-like_C_sf"/>
</dbReference>
<dbReference type="InterPro" id="IPR001555">
    <property type="entry name" value="GART_AS"/>
</dbReference>
<dbReference type="InterPro" id="IPR044135">
    <property type="entry name" value="Met-tRNA-FMT_C"/>
</dbReference>
<dbReference type="InterPro" id="IPR041711">
    <property type="entry name" value="Met-tRNA-FMT_N"/>
</dbReference>
<dbReference type="NCBIfam" id="TIGR00460">
    <property type="entry name" value="fmt"/>
    <property type="match status" value="1"/>
</dbReference>
<dbReference type="PANTHER" id="PTHR11138">
    <property type="entry name" value="METHIONYL-TRNA FORMYLTRANSFERASE"/>
    <property type="match status" value="1"/>
</dbReference>
<dbReference type="PANTHER" id="PTHR11138:SF5">
    <property type="entry name" value="METHIONYL-TRNA FORMYLTRANSFERASE, MITOCHONDRIAL"/>
    <property type="match status" value="1"/>
</dbReference>
<dbReference type="Pfam" id="PF02911">
    <property type="entry name" value="Formyl_trans_C"/>
    <property type="match status" value="1"/>
</dbReference>
<dbReference type="Pfam" id="PF00551">
    <property type="entry name" value="Formyl_trans_N"/>
    <property type="match status" value="1"/>
</dbReference>
<dbReference type="SUPFAM" id="SSF50486">
    <property type="entry name" value="FMT C-terminal domain-like"/>
    <property type="match status" value="1"/>
</dbReference>
<dbReference type="SUPFAM" id="SSF53328">
    <property type="entry name" value="Formyltransferase"/>
    <property type="match status" value="1"/>
</dbReference>
<dbReference type="PROSITE" id="PS00373">
    <property type="entry name" value="GART"/>
    <property type="match status" value="1"/>
</dbReference>